<evidence type="ECO:0000250" key="1">
    <source>
        <dbReference type="UniProtKB" id="Q9H6J7"/>
    </source>
</evidence>
<evidence type="ECO:0000256" key="2">
    <source>
        <dbReference type="SAM" id="MobiDB-lite"/>
    </source>
</evidence>
<evidence type="ECO:0000269" key="3">
    <source>
    </source>
</evidence>
<evidence type="ECO:0000305" key="4"/>
<organism>
    <name type="scientific">Danio rerio</name>
    <name type="common">Zebrafish</name>
    <name type="synonym">Brachydanio rerio</name>
    <dbReference type="NCBI Taxonomy" id="7955"/>
    <lineage>
        <taxon>Eukaryota</taxon>
        <taxon>Metazoa</taxon>
        <taxon>Chordata</taxon>
        <taxon>Craniata</taxon>
        <taxon>Vertebrata</taxon>
        <taxon>Euteleostomi</taxon>
        <taxon>Actinopterygii</taxon>
        <taxon>Neopterygii</taxon>
        <taxon>Teleostei</taxon>
        <taxon>Ostariophysi</taxon>
        <taxon>Cypriniformes</taxon>
        <taxon>Danionidae</taxon>
        <taxon>Danioninae</taxon>
        <taxon>Danio</taxon>
    </lineage>
</organism>
<name>CSTP1_DANRE</name>
<sequence length="331" mass="37750">MKMNTERFNLTVDEYLAETNVLFYLNDAVTQLLEHKEEYTQFGVVRYFAEYFTSVKNGNHVLFREFSYIKATPHNRESFIHIFWKCFRQIGKNGDLLAMSEYSSLLQLLCPDFPAEMVQNTARIVLIDDVTDCLMSFSDFIYSFQIQFFYEEFVESISAIYQDLLSGKNPNTVIVPTSTSVEQLSSSANDKPDVQEGVDATIFCECIEGLCERFKHKYPSTVAIKEILDNTQRVSFYGFLMALAKHEGINQDIGALPNKPDLLIDPEMDQELERLIAQVAISPTSNNNSSSSALGQKEMSKKASPRKSLHQRKRIEMESDGSTEETDSSEN</sequence>
<reference key="1">
    <citation type="submission" date="2004-07" db="EMBL/GenBank/DDBJ databases">
        <authorList>
            <consortium name="NIH - Zebrafish Gene Collection (ZGC) project"/>
        </authorList>
    </citation>
    <scope>NUCLEOTIDE SEQUENCE [LARGE SCALE MRNA]</scope>
    <source>
        <tissue>Brain</tissue>
    </source>
</reference>
<reference key="2">
    <citation type="journal article" date="2022" name="Cell Res.">
        <title>Regulators of tubulin polyglutamylation control nuclear shape and cilium disassembly by balancing microtubule and actin assembly.</title>
        <authorList>
            <person name="Wang L."/>
            <person name="Paudyal S.C."/>
            <person name="Kang Y."/>
            <person name="Owa M."/>
            <person name="Liang F.X."/>
            <person name="Spektor A."/>
            <person name="Knaut H."/>
            <person name="Sanchez I."/>
            <person name="Dynlacht B.D."/>
        </authorList>
    </citation>
    <scope>FUNCTION</scope>
    <scope>SUBCELLULAR LOCATION</scope>
    <scope>DISRUPTION PHENOTYPE</scope>
    <scope>TISSUE SPECIFICITY</scope>
</reference>
<feature type="chain" id="PRO_0000360150" description="Centriolar satellite-associated tubulin polyglutamylase complex regulator 1">
    <location>
        <begin position="1"/>
        <end position="331"/>
    </location>
</feature>
<feature type="region of interest" description="Disordered" evidence="2">
    <location>
        <begin position="283"/>
        <end position="331"/>
    </location>
</feature>
<feature type="compositionally biased region" description="Basic residues" evidence="2">
    <location>
        <begin position="303"/>
        <end position="313"/>
    </location>
</feature>
<feature type="compositionally biased region" description="Acidic residues" evidence="2">
    <location>
        <begin position="318"/>
        <end position="331"/>
    </location>
</feature>
<protein>
    <recommendedName>
        <fullName>Centriolar satellite-associated tubulin polyglutamylase complex regulator 1</fullName>
    </recommendedName>
</protein>
<dbReference type="EMBL" id="BC076333">
    <property type="protein sequence ID" value="AAH76333.1"/>
    <property type="molecule type" value="mRNA"/>
</dbReference>
<dbReference type="RefSeq" id="NP_001002479.1">
    <property type="nucleotide sequence ID" value="NM_001002479.1"/>
</dbReference>
<dbReference type="FunCoup" id="Q6DGK9">
    <property type="interactions" value="1942"/>
</dbReference>
<dbReference type="STRING" id="7955.ENSDARP00000134616"/>
<dbReference type="PaxDb" id="7955-ENSDARP00000105334"/>
<dbReference type="GeneID" id="436752"/>
<dbReference type="KEGG" id="dre:436752"/>
<dbReference type="AGR" id="ZFIN:ZDB-GENE-040718-182"/>
<dbReference type="CTD" id="79096"/>
<dbReference type="ZFIN" id="ZDB-GENE-040718-182">
    <property type="gene designation" value="cstpp1"/>
</dbReference>
<dbReference type="eggNOG" id="ENOG502QRVN">
    <property type="taxonomic scope" value="Eukaryota"/>
</dbReference>
<dbReference type="InParanoid" id="Q6DGK9"/>
<dbReference type="OrthoDB" id="197906at2759"/>
<dbReference type="PhylomeDB" id="Q6DGK9"/>
<dbReference type="PRO" id="PR:Q6DGK9"/>
<dbReference type="Proteomes" id="UP000000437">
    <property type="component" value="Chromosome 25"/>
</dbReference>
<dbReference type="GO" id="GO:0034451">
    <property type="term" value="C:centriolar satellite"/>
    <property type="evidence" value="ECO:0007669"/>
    <property type="project" value="UniProtKB-SubCell"/>
</dbReference>
<dbReference type="GO" id="GO:0005737">
    <property type="term" value="C:cytoplasm"/>
    <property type="evidence" value="ECO:0007669"/>
    <property type="project" value="UniProtKB-KW"/>
</dbReference>
<dbReference type="GO" id="GO:0005874">
    <property type="term" value="C:microtubule"/>
    <property type="evidence" value="ECO:0007669"/>
    <property type="project" value="UniProtKB-KW"/>
</dbReference>
<dbReference type="CDD" id="cd22959">
    <property type="entry name" value="DD_C11orf49"/>
    <property type="match status" value="1"/>
</dbReference>
<dbReference type="InterPro" id="IPR038968">
    <property type="entry name" value="CSTPP1"/>
</dbReference>
<dbReference type="PANTHER" id="PTHR34252:SF1">
    <property type="entry name" value="CENTRIOLAR SATELLITE-ASSOCIATED TUBULIN POLYGLUTAMYLASE COMPLEX REGULATOR 1"/>
    <property type="match status" value="1"/>
</dbReference>
<dbReference type="PANTHER" id="PTHR34252">
    <property type="entry name" value="UPF0705 PROTEIN C11ORF49"/>
    <property type="match status" value="1"/>
</dbReference>
<keyword id="KW-0963">Cytoplasm</keyword>
<keyword id="KW-0206">Cytoskeleton</keyword>
<keyword id="KW-0493">Microtubule</keyword>
<keyword id="KW-0597">Phosphoprotein</keyword>
<keyword id="KW-1185">Reference proteome</keyword>
<proteinExistence type="evidence at transcript level"/>
<comment type="function">
    <text evidence="1">Regulator of the tubulin polyglutamylase complex (TPGC) that controls cytoskeletal organization, nuclear shape, and cilium disassembly by balancing microtubule and actin assembly. Regulates the assembly and stability of the TPGC and thereby modulates polyglutamylation of the microtubule, which antagonizes MAP4 binding.</text>
</comment>
<comment type="subunit">
    <text evidence="1">Interacts with PCM1. Interacts with the complex TPGC. Binds to alpha-tubulin.</text>
</comment>
<comment type="subcellular location">
    <subcellularLocation>
        <location evidence="1">Cytoplasm</location>
        <location evidence="1">Cytoskeleton</location>
        <location evidence="1">Microtubule organizing center</location>
        <location evidence="1">Centrosome</location>
        <location evidence="1">Centriolar satellite</location>
    </subcellularLocation>
    <subcellularLocation>
        <location evidence="1">Cytoplasm</location>
        <location evidence="1">Cytoskeleton</location>
    </subcellularLocation>
    <text evidence="1">Associated with microtubules.</text>
</comment>
<comment type="tissue specificity">
    <text evidence="3">Expression in elevated in ciliated tissues/organs, including brain, spinal cord, kidney, eyes, ears and lateral line.</text>
</comment>
<comment type="disruption phenotype">
    <text evidence="3">Mutants survive to adulthood and produce offspring (PubMed:34782749). Embryos show a significant defect in heart looping, with an increased proportion of embryos without a looped heart (PubMed:34782749). the They have an increased percentage of ciliated cells and ciliary length in Kupffer's Vesicle, although these alterations are not observed in the ear, pronephros or neural tube (PubMed:34782749).</text>
</comment>
<comment type="similarity">
    <text evidence="4">Belongs to the CSTPP1 family.</text>
</comment>
<accession>Q6DGK9</accession>
<gene>
    <name type="primary">cstpp1</name>
    <name type="ORF">zgc:92873</name>
</gene>